<evidence type="ECO:0000255" key="1"/>
<evidence type="ECO:0000255" key="2">
    <source>
        <dbReference type="PROSITE-ProRule" id="PRU00550"/>
    </source>
</evidence>
<evidence type="ECO:0000269" key="3">
    <source>
    </source>
</evidence>
<evidence type="ECO:0000303" key="4">
    <source>
    </source>
</evidence>
<evidence type="ECO:0000305" key="5"/>
<evidence type="ECO:0000312" key="6">
    <source>
        <dbReference type="EMBL" id="AAL28951.1"/>
    </source>
</evidence>
<evidence type="ECO:0000312" key="7">
    <source>
        <dbReference type="FlyBase" id="FBgn0037116"/>
    </source>
</evidence>
<evidence type="ECO:0000312" key="8">
    <source>
        <dbReference type="Proteomes" id="UP000000803"/>
    </source>
</evidence>
<keyword id="KW-0343">GTPase activation</keyword>
<keyword id="KW-0344">Guanine-nucleotide releasing factor</keyword>
<keyword id="KW-1185">Reference proteome</keyword>
<keyword id="KW-0677">Repeat</keyword>
<comment type="function">
    <text evidence="3">Has guanine nucleotide exchange factor (GEF) activity towards Rab5. Promotes the exchange of GDP to GTP, converting inactive GDP-bound Rab5 into its active GTP-bound form.</text>
</comment>
<comment type="tissue specificity">
    <text evidence="3">In the embryo, expressed in a wide range of tissues including the epidermis and the ventral nerve cord.</text>
</comment>
<comment type="disruption phenotype">
    <text evidence="3">Deterioration of locomotion in adults with climbing ability strongly depressed.</text>
</comment>
<proteinExistence type="evidence at protein level"/>
<sequence>MASAADDSALGGQEERESFTIYHEGRELQLHWRGLPPLQRFPASRICSNAGGELLLLTTDHALYSAKLQANREHMDLQLLRTDVVDMDFCSGSQELFVVLTNGSVQRQATGSGRDVGHPHAWQTLGFDPLELHAEGVRIRRVCCSAQGVVFVGASGETYVMGSCGEVFKAEQQPRHMRLYEEGKELLDLAAGNEHFVMLVAPYNLADDALQLSVASAKEEPEDERASVKSISSGHSERSVAANTRHLLHQGYALLHTQLFTFGASNNGLLGSGDHIRRANVMRLQKLDSMGVCSIAAGLEHTVARTLDGRLYHWGLNNHSQLGEDVSSPMEITITENTAALPIEQNSALEATCGDYHTLLLNASGQIHSLQPAPPMRHLQQSSTYAQTLLQLQLGAAWPRQLRLLMCSGGYTLQNQRQFQRQYHYYLSHLQSQLQLLLKHRQAVQTLEIWQRQSALEPLSALGPLLINWERILCLLVATLHSLEGFYRADFVQPADLLFICHYKEYIDLFDGYTKAYCDVFSVNGFGEAVVAITGLSSPLAELNEESYVTRLFQQPFSIYQLFVQFMELLVRTQSEYGEHRVAWSEFARHSCISQELAVNTKDFWSSNDRNPRIVQFRGRHRRVILTSALVPLKLVTSGISRSSNSFILFSDFLCQVSGNSLYSYPLTTLWVWTEGDSLRLTTPEKSFLVSTRSQEMRKVWLDQLQSSIIASLGKPLGSPVPSYRSTGYEFSREHPKFSRVKACGTWRKGVLHGNCYLEYPDGSVYCGELQHGIIEGFGKMVIPTTGLYVGNFKGGRFHGHGVYEMHCKDSPESEVYEGNFCEGLFHGHGVMRNNRYIYVGEYQANARSGYGVIEDLVSGDKYMGMFADNKRSGIGSCITNRGDYFEGSFSGDDLTGSGVAVFENDYYYEGELTLLGPNGRGEYYMPSGDACGGSGAMGTGEFDDTCELIGNKMFGQLSGTWDTVRIQAGELVLNRRFPKYPSSLGRQVVDHNRKWRSLFNNFESDLANCTASTSSSGGNQSAGTLRKSSKPTLSTAQIWNCIAVYMSKQRAREGTKPGNYFNNILLSLPLPQKTSSPLAKARTTTSALSKLQTEAASALDFLGFPPRRIQSQEALNSKPGGLQRADSLISMGHNTSRDLDNSSLASFQLDQSLMNSTVNGDESSTFNESFSKLSHNNNNSISKHMNNIDCSITSTTSTTSAVLDQVPSFGMALVLTEQDVTSIRLYLEQAFKDRHHPLYVLNERIANCFHYSYGYWKVKPTPILAKQAMREWESISRRIYRFVRKMFPALPEELCQMEGSREVISHITLLYPLVLSEGIYSTLFVLYANKYSRKDEMYRQNLNLAEKLKDQELVELMGHESFLHNVMLDPKFVESVQTLKELQEKFSPQDMLTVIQRSTQLLTEAYEHAMAANAAQLNADNMIPLTMLTMLRAAVPHLGAELALLDDLTGGPNFQAEMNGMAGYCYTTLKAAYEHVTSRALQKIP</sequence>
<name>ALS2_DROME</name>
<organism evidence="8">
    <name type="scientific">Drosophila melanogaster</name>
    <name type="common">Fruit fly</name>
    <dbReference type="NCBI Taxonomy" id="7227"/>
    <lineage>
        <taxon>Eukaryota</taxon>
        <taxon>Metazoa</taxon>
        <taxon>Ecdysozoa</taxon>
        <taxon>Arthropoda</taxon>
        <taxon>Hexapoda</taxon>
        <taxon>Insecta</taxon>
        <taxon>Pterygota</taxon>
        <taxon>Neoptera</taxon>
        <taxon>Endopterygota</taxon>
        <taxon>Diptera</taxon>
        <taxon>Brachycera</taxon>
        <taxon>Muscomorpha</taxon>
        <taxon>Ephydroidea</taxon>
        <taxon>Drosophilidae</taxon>
        <taxon>Drosophila</taxon>
        <taxon>Sophophora</taxon>
    </lineage>
</organism>
<feature type="chain" id="PRO_0000436307" description="Alsin homolog">
    <location>
        <begin position="1"/>
        <end position="1486"/>
    </location>
</feature>
<feature type="repeat" description="RCC1 1" evidence="1">
    <location>
        <begin position="147"/>
        <end position="201"/>
    </location>
</feature>
<feature type="repeat" description="RCC1 2" evidence="1">
    <location>
        <begin position="256"/>
        <end position="307"/>
    </location>
</feature>
<feature type="repeat" description="RCC1 3" evidence="1">
    <location>
        <begin position="308"/>
        <end position="363"/>
    </location>
</feature>
<feature type="repeat" description="MORN 1" evidence="1">
    <location>
        <begin position="744"/>
        <end position="765"/>
    </location>
</feature>
<feature type="repeat" description="MORN 2" evidence="1">
    <location>
        <begin position="766"/>
        <end position="784"/>
    </location>
</feature>
<feature type="repeat" description="MORN 3" evidence="1">
    <location>
        <begin position="789"/>
        <end position="804"/>
    </location>
</feature>
<feature type="repeat" description="MORN 4" evidence="1">
    <location>
        <begin position="817"/>
        <end position="832"/>
    </location>
</feature>
<feature type="repeat" description="MORN 5" evidence="1">
    <location>
        <begin position="839"/>
        <end position="853"/>
    </location>
</feature>
<feature type="repeat" description="MORN 6" evidence="1">
    <location>
        <begin position="863"/>
        <end position="884"/>
    </location>
</feature>
<feature type="domain" description="VPS9" evidence="2">
    <location>
        <begin position="1333"/>
        <end position="1486"/>
    </location>
</feature>
<feature type="mutagenesis site" description="Reduced GEF activity." evidence="3">
    <original>P</original>
    <variation>A</variation>
    <location>
        <position position="1425"/>
    </location>
</feature>
<feature type="mutagenesis site" description="Reduced GEF activity." evidence="3">
    <original>L</original>
    <variation>A</variation>
    <location>
        <position position="1439"/>
    </location>
</feature>
<accession>Q9VNZ8</accession>
<dbReference type="EMBL" id="AE014296">
    <property type="protein sequence ID" value="AAF51764.1"/>
    <property type="molecule type" value="Genomic_DNA"/>
</dbReference>
<dbReference type="EMBL" id="AY061403">
    <property type="protein sequence ID" value="AAL28951.1"/>
    <property type="molecule type" value="mRNA"/>
</dbReference>
<dbReference type="RefSeq" id="NP_649347.1">
    <property type="nucleotide sequence ID" value="NM_141090.3"/>
</dbReference>
<dbReference type="SMR" id="Q9VNZ8"/>
<dbReference type="FunCoup" id="Q9VNZ8">
    <property type="interactions" value="328"/>
</dbReference>
<dbReference type="IntAct" id="Q9VNZ8">
    <property type="interactions" value="5"/>
</dbReference>
<dbReference type="STRING" id="7227.FBpp0078116"/>
<dbReference type="PaxDb" id="7227-FBpp0078116"/>
<dbReference type="DNASU" id="40410"/>
<dbReference type="EnsemblMetazoa" id="FBtr0078462">
    <property type="protein sequence ID" value="FBpp0078116"/>
    <property type="gene ID" value="FBgn0037116"/>
</dbReference>
<dbReference type="GeneID" id="40410"/>
<dbReference type="KEGG" id="dme:Dmel_CG7158"/>
<dbReference type="UCSC" id="CG7158-RA">
    <property type="organism name" value="d. melanogaster"/>
</dbReference>
<dbReference type="AGR" id="FB:FBgn0037116"/>
<dbReference type="CTD" id="57679"/>
<dbReference type="FlyBase" id="FBgn0037116">
    <property type="gene designation" value="Als2"/>
</dbReference>
<dbReference type="VEuPathDB" id="VectorBase:FBgn0037116"/>
<dbReference type="eggNOG" id="KOG0231">
    <property type="taxonomic scope" value="Eukaryota"/>
</dbReference>
<dbReference type="eggNOG" id="KOG1426">
    <property type="taxonomic scope" value="Eukaryota"/>
</dbReference>
<dbReference type="HOGENOM" id="CLU_004393_0_0_1"/>
<dbReference type="InParanoid" id="Q9VNZ8"/>
<dbReference type="OMA" id="CIAVYMS"/>
<dbReference type="OrthoDB" id="48314at2759"/>
<dbReference type="PhylomeDB" id="Q9VNZ8"/>
<dbReference type="Reactome" id="R-DME-8876198">
    <property type="pathway name" value="RAB GEFs exchange GTP for GDP on RABs"/>
</dbReference>
<dbReference type="Reactome" id="R-DME-9013149">
    <property type="pathway name" value="RAC1 GTPase cycle"/>
</dbReference>
<dbReference type="BioGRID-ORCS" id="40410">
    <property type="hits" value="0 hits in 3 CRISPR screens"/>
</dbReference>
<dbReference type="GenomeRNAi" id="40410"/>
<dbReference type="PRO" id="PR:Q9VNZ8"/>
<dbReference type="Proteomes" id="UP000000803">
    <property type="component" value="Chromosome 3L"/>
</dbReference>
<dbReference type="Bgee" id="FBgn0037116">
    <property type="expression patterns" value="Expressed in transmedullary neuron Tm4 (Drosophila) in insect head and 101 other cell types or tissues"/>
</dbReference>
<dbReference type="GO" id="GO:0005737">
    <property type="term" value="C:cytoplasm"/>
    <property type="evidence" value="ECO:0000318"/>
    <property type="project" value="GO_Central"/>
</dbReference>
<dbReference type="GO" id="GO:0043231">
    <property type="term" value="C:intracellular membrane-bounded organelle"/>
    <property type="evidence" value="ECO:0000318"/>
    <property type="project" value="GO_Central"/>
</dbReference>
<dbReference type="GO" id="GO:0031982">
    <property type="term" value="C:vesicle"/>
    <property type="evidence" value="ECO:0000250"/>
    <property type="project" value="FlyBase"/>
</dbReference>
<dbReference type="GO" id="GO:0005096">
    <property type="term" value="F:GTPase activator activity"/>
    <property type="evidence" value="ECO:0007669"/>
    <property type="project" value="UniProtKB-KW"/>
</dbReference>
<dbReference type="GO" id="GO:0005085">
    <property type="term" value="F:guanyl-nucleotide exchange factor activity"/>
    <property type="evidence" value="ECO:0000314"/>
    <property type="project" value="FlyBase"/>
</dbReference>
<dbReference type="GO" id="GO:0031267">
    <property type="term" value="F:small GTPase binding"/>
    <property type="evidence" value="ECO:0000318"/>
    <property type="project" value="GO_Central"/>
</dbReference>
<dbReference type="GO" id="GO:0045022">
    <property type="term" value="P:early endosome to late endosome transport"/>
    <property type="evidence" value="ECO:0000315"/>
    <property type="project" value="FlyBase"/>
</dbReference>
<dbReference type="GO" id="GO:0016197">
    <property type="term" value="P:endosomal transport"/>
    <property type="evidence" value="ECO:0000318"/>
    <property type="project" value="GO_Central"/>
</dbReference>
<dbReference type="GO" id="GO:0035011">
    <property type="term" value="P:melanotic encapsulation of foreign target"/>
    <property type="evidence" value="ECO:0000315"/>
    <property type="project" value="FlyBase"/>
</dbReference>
<dbReference type="GO" id="GO:0032483">
    <property type="term" value="P:regulation of Rab protein signal transduction"/>
    <property type="evidence" value="ECO:0000255"/>
    <property type="project" value="FlyBase"/>
</dbReference>
<dbReference type="FunFam" id="1.20.1050.80:FF:000016">
    <property type="entry name" value="Alsin homolog"/>
    <property type="match status" value="1"/>
</dbReference>
<dbReference type="Gene3D" id="2.20.110.10">
    <property type="entry name" value="Histone H3 K4-specific methyltransferase SET7/9 N-terminal domain"/>
    <property type="match status" value="1"/>
</dbReference>
<dbReference type="Gene3D" id="2.130.10.30">
    <property type="entry name" value="Regulator of chromosome condensation 1/beta-lactamase-inhibitor protein II"/>
    <property type="match status" value="1"/>
</dbReference>
<dbReference type="Gene3D" id="1.20.1050.80">
    <property type="entry name" value="VPS9 domain"/>
    <property type="match status" value="1"/>
</dbReference>
<dbReference type="InterPro" id="IPR051984">
    <property type="entry name" value="Alsin_GEFs/MotNeuronReg"/>
</dbReference>
<dbReference type="InterPro" id="IPR003409">
    <property type="entry name" value="MORN"/>
</dbReference>
<dbReference type="InterPro" id="IPR009091">
    <property type="entry name" value="RCC1/BLIP-II"/>
</dbReference>
<dbReference type="InterPro" id="IPR000408">
    <property type="entry name" value="Reg_chr_condens"/>
</dbReference>
<dbReference type="InterPro" id="IPR003123">
    <property type="entry name" value="VPS9"/>
</dbReference>
<dbReference type="InterPro" id="IPR037191">
    <property type="entry name" value="VPS9_dom_sf"/>
</dbReference>
<dbReference type="PANTHER" id="PTHR46089">
    <property type="entry name" value="ALSIN HOMOLOG"/>
    <property type="match status" value="1"/>
</dbReference>
<dbReference type="PANTHER" id="PTHR46089:SF2">
    <property type="entry name" value="ALSIN HOMOLOG"/>
    <property type="match status" value="1"/>
</dbReference>
<dbReference type="Pfam" id="PF25384">
    <property type="entry name" value="Alsin_RLD"/>
    <property type="match status" value="1"/>
</dbReference>
<dbReference type="Pfam" id="PF25389">
    <property type="entry name" value="DH_alsin"/>
    <property type="match status" value="1"/>
</dbReference>
<dbReference type="Pfam" id="PF02493">
    <property type="entry name" value="MORN"/>
    <property type="match status" value="6"/>
</dbReference>
<dbReference type="Pfam" id="PF25383">
    <property type="entry name" value="PH_alsin"/>
    <property type="match status" value="1"/>
</dbReference>
<dbReference type="Pfam" id="PF02204">
    <property type="entry name" value="VPS9"/>
    <property type="match status" value="1"/>
</dbReference>
<dbReference type="SMART" id="SM00698">
    <property type="entry name" value="MORN"/>
    <property type="match status" value="5"/>
</dbReference>
<dbReference type="SUPFAM" id="SSF82185">
    <property type="entry name" value="Histone H3 K4-specific methyltransferase SET7/9 N-terminal domain"/>
    <property type="match status" value="2"/>
</dbReference>
<dbReference type="SUPFAM" id="SSF50729">
    <property type="entry name" value="PH domain-like"/>
    <property type="match status" value="1"/>
</dbReference>
<dbReference type="SUPFAM" id="SSF50985">
    <property type="entry name" value="RCC1/BLIP-II"/>
    <property type="match status" value="1"/>
</dbReference>
<dbReference type="SUPFAM" id="SSF109993">
    <property type="entry name" value="VPS9 domain"/>
    <property type="match status" value="1"/>
</dbReference>
<dbReference type="PROSITE" id="PS00626">
    <property type="entry name" value="RCC1_2"/>
    <property type="match status" value="1"/>
</dbReference>
<dbReference type="PROSITE" id="PS50012">
    <property type="entry name" value="RCC1_3"/>
    <property type="match status" value="2"/>
</dbReference>
<dbReference type="PROSITE" id="PS51205">
    <property type="entry name" value="VPS9"/>
    <property type="match status" value="1"/>
</dbReference>
<reference evidence="8" key="1">
    <citation type="journal article" date="2000" name="Science">
        <title>The genome sequence of Drosophila melanogaster.</title>
        <authorList>
            <person name="Adams M.D."/>
            <person name="Celniker S.E."/>
            <person name="Holt R.A."/>
            <person name="Evans C.A."/>
            <person name="Gocayne J.D."/>
            <person name="Amanatides P.G."/>
            <person name="Scherer S.E."/>
            <person name="Li P.W."/>
            <person name="Hoskins R.A."/>
            <person name="Galle R.F."/>
            <person name="George R.A."/>
            <person name="Lewis S.E."/>
            <person name="Richards S."/>
            <person name="Ashburner M."/>
            <person name="Henderson S.N."/>
            <person name="Sutton G.G."/>
            <person name="Wortman J.R."/>
            <person name="Yandell M.D."/>
            <person name="Zhang Q."/>
            <person name="Chen L.X."/>
            <person name="Brandon R.C."/>
            <person name="Rogers Y.-H.C."/>
            <person name="Blazej R.G."/>
            <person name="Champe M."/>
            <person name="Pfeiffer B.D."/>
            <person name="Wan K.H."/>
            <person name="Doyle C."/>
            <person name="Baxter E.G."/>
            <person name="Helt G."/>
            <person name="Nelson C.R."/>
            <person name="Miklos G.L.G."/>
            <person name="Abril J.F."/>
            <person name="Agbayani A."/>
            <person name="An H.-J."/>
            <person name="Andrews-Pfannkoch C."/>
            <person name="Baldwin D."/>
            <person name="Ballew R.M."/>
            <person name="Basu A."/>
            <person name="Baxendale J."/>
            <person name="Bayraktaroglu L."/>
            <person name="Beasley E.M."/>
            <person name="Beeson K.Y."/>
            <person name="Benos P.V."/>
            <person name="Berman B.P."/>
            <person name="Bhandari D."/>
            <person name="Bolshakov S."/>
            <person name="Borkova D."/>
            <person name="Botchan M.R."/>
            <person name="Bouck J."/>
            <person name="Brokstein P."/>
            <person name="Brottier P."/>
            <person name="Burtis K.C."/>
            <person name="Busam D.A."/>
            <person name="Butler H."/>
            <person name="Cadieu E."/>
            <person name="Center A."/>
            <person name="Chandra I."/>
            <person name="Cherry J.M."/>
            <person name="Cawley S."/>
            <person name="Dahlke C."/>
            <person name="Davenport L.B."/>
            <person name="Davies P."/>
            <person name="de Pablos B."/>
            <person name="Delcher A."/>
            <person name="Deng Z."/>
            <person name="Mays A.D."/>
            <person name="Dew I."/>
            <person name="Dietz S.M."/>
            <person name="Dodson K."/>
            <person name="Doup L.E."/>
            <person name="Downes M."/>
            <person name="Dugan-Rocha S."/>
            <person name="Dunkov B.C."/>
            <person name="Dunn P."/>
            <person name="Durbin K.J."/>
            <person name="Evangelista C.C."/>
            <person name="Ferraz C."/>
            <person name="Ferriera S."/>
            <person name="Fleischmann W."/>
            <person name="Fosler C."/>
            <person name="Gabrielian A.E."/>
            <person name="Garg N.S."/>
            <person name="Gelbart W.M."/>
            <person name="Glasser K."/>
            <person name="Glodek A."/>
            <person name="Gong F."/>
            <person name="Gorrell J.H."/>
            <person name="Gu Z."/>
            <person name="Guan P."/>
            <person name="Harris M."/>
            <person name="Harris N.L."/>
            <person name="Harvey D.A."/>
            <person name="Heiman T.J."/>
            <person name="Hernandez J.R."/>
            <person name="Houck J."/>
            <person name="Hostin D."/>
            <person name="Houston K.A."/>
            <person name="Howland T.J."/>
            <person name="Wei M.-H."/>
            <person name="Ibegwam C."/>
            <person name="Jalali M."/>
            <person name="Kalush F."/>
            <person name="Karpen G.H."/>
            <person name="Ke Z."/>
            <person name="Kennison J.A."/>
            <person name="Ketchum K.A."/>
            <person name="Kimmel B.E."/>
            <person name="Kodira C.D."/>
            <person name="Kraft C.L."/>
            <person name="Kravitz S."/>
            <person name="Kulp D."/>
            <person name="Lai Z."/>
            <person name="Lasko P."/>
            <person name="Lei Y."/>
            <person name="Levitsky A.A."/>
            <person name="Li J.H."/>
            <person name="Li Z."/>
            <person name="Liang Y."/>
            <person name="Lin X."/>
            <person name="Liu X."/>
            <person name="Mattei B."/>
            <person name="McIntosh T.C."/>
            <person name="McLeod M.P."/>
            <person name="McPherson D."/>
            <person name="Merkulov G."/>
            <person name="Milshina N.V."/>
            <person name="Mobarry C."/>
            <person name="Morris J."/>
            <person name="Moshrefi A."/>
            <person name="Mount S.M."/>
            <person name="Moy M."/>
            <person name="Murphy B."/>
            <person name="Murphy L."/>
            <person name="Muzny D.M."/>
            <person name="Nelson D.L."/>
            <person name="Nelson D.R."/>
            <person name="Nelson K.A."/>
            <person name="Nixon K."/>
            <person name="Nusskern D.R."/>
            <person name="Pacleb J.M."/>
            <person name="Palazzolo M."/>
            <person name="Pittman G.S."/>
            <person name="Pan S."/>
            <person name="Pollard J."/>
            <person name="Puri V."/>
            <person name="Reese M.G."/>
            <person name="Reinert K."/>
            <person name="Remington K."/>
            <person name="Saunders R.D.C."/>
            <person name="Scheeler F."/>
            <person name="Shen H."/>
            <person name="Shue B.C."/>
            <person name="Siden-Kiamos I."/>
            <person name="Simpson M."/>
            <person name="Skupski M.P."/>
            <person name="Smith T.J."/>
            <person name="Spier E."/>
            <person name="Spradling A.C."/>
            <person name="Stapleton M."/>
            <person name="Strong R."/>
            <person name="Sun E."/>
            <person name="Svirskas R."/>
            <person name="Tector C."/>
            <person name="Turner R."/>
            <person name="Venter E."/>
            <person name="Wang A.H."/>
            <person name="Wang X."/>
            <person name="Wang Z.-Y."/>
            <person name="Wassarman D.A."/>
            <person name="Weinstock G.M."/>
            <person name="Weissenbach J."/>
            <person name="Williams S.M."/>
            <person name="Woodage T."/>
            <person name="Worley K.C."/>
            <person name="Wu D."/>
            <person name="Yang S."/>
            <person name="Yao Q.A."/>
            <person name="Ye J."/>
            <person name="Yeh R.-F."/>
            <person name="Zaveri J.S."/>
            <person name="Zhan M."/>
            <person name="Zhang G."/>
            <person name="Zhao Q."/>
            <person name="Zheng L."/>
            <person name="Zheng X.H."/>
            <person name="Zhong F.N."/>
            <person name="Zhong W."/>
            <person name="Zhou X."/>
            <person name="Zhu S.C."/>
            <person name="Zhu X."/>
            <person name="Smith H.O."/>
            <person name="Gibbs R.A."/>
            <person name="Myers E.W."/>
            <person name="Rubin G.M."/>
            <person name="Venter J.C."/>
        </authorList>
    </citation>
    <scope>NUCLEOTIDE SEQUENCE [LARGE SCALE GENOMIC DNA]</scope>
    <source>
        <strain evidence="8">Berkeley</strain>
    </source>
</reference>
<reference evidence="8" key="2">
    <citation type="journal article" date="2002" name="Genome Biol.">
        <title>Annotation of the Drosophila melanogaster euchromatic genome: a systematic review.</title>
        <authorList>
            <person name="Misra S."/>
            <person name="Crosby M.A."/>
            <person name="Mungall C.J."/>
            <person name="Matthews B.B."/>
            <person name="Campbell K.S."/>
            <person name="Hradecky P."/>
            <person name="Huang Y."/>
            <person name="Kaminker J.S."/>
            <person name="Millburn G.H."/>
            <person name="Prochnik S.E."/>
            <person name="Smith C.D."/>
            <person name="Tupy J.L."/>
            <person name="Whitfield E.J."/>
            <person name="Bayraktaroglu L."/>
            <person name="Berman B.P."/>
            <person name="Bettencourt B.R."/>
            <person name="Celniker S.E."/>
            <person name="de Grey A.D.N.J."/>
            <person name="Drysdale R.A."/>
            <person name="Harris N.L."/>
            <person name="Richter J."/>
            <person name="Russo S."/>
            <person name="Schroeder A.J."/>
            <person name="Shu S.Q."/>
            <person name="Stapleton M."/>
            <person name="Yamada C."/>
            <person name="Ashburner M."/>
            <person name="Gelbart W.M."/>
            <person name="Rubin G.M."/>
            <person name="Lewis S.E."/>
        </authorList>
    </citation>
    <scope>GENOME REANNOTATION</scope>
    <source>
        <strain evidence="8">Berkeley</strain>
    </source>
</reference>
<reference evidence="6" key="3">
    <citation type="journal article" date="2002" name="Genome Biol.">
        <title>A Drosophila full-length cDNA resource.</title>
        <authorList>
            <person name="Stapleton M."/>
            <person name="Carlson J.W."/>
            <person name="Brokstein P."/>
            <person name="Yu C."/>
            <person name="Champe M."/>
            <person name="George R.A."/>
            <person name="Guarin H."/>
            <person name="Kronmiller B."/>
            <person name="Pacleb J.M."/>
            <person name="Park S."/>
            <person name="Wan K.H."/>
            <person name="Rubin G.M."/>
            <person name="Celniker S.E."/>
        </authorList>
    </citation>
    <scope>NUCLEOTIDE SEQUENCE [LARGE SCALE MRNA]</scope>
    <source>
        <strain evidence="6">Berkeley</strain>
        <tissue evidence="6">Embryo</tissue>
    </source>
</reference>
<reference evidence="5" key="4">
    <citation type="journal article" date="2014" name="Genes Cells">
        <title>Age-dependent deterioration of locomotion in Drosophila melanogaster deficient in the homologue of amyotrophic lateral sclerosis 2.</title>
        <authorList>
            <person name="Takayama Y."/>
            <person name="Itoh R.E."/>
            <person name="Tsuyama T."/>
            <person name="Uemura T."/>
        </authorList>
    </citation>
    <scope>FUNCTION</scope>
    <scope>TISSUE SPECIFICITY</scope>
    <scope>DISRUPTION PHENOTYPE</scope>
    <scope>MUTAGENESIS OF PRO-1425 AND LEU-1439</scope>
</reference>
<protein>
    <recommendedName>
        <fullName evidence="5">Alsin homolog</fullName>
    </recommendedName>
    <alternativeName>
        <fullName evidence="4">Amyotrophic lateral sclerosis 2 protein homolog</fullName>
    </alternativeName>
</protein>
<gene>
    <name evidence="7" type="primary">Als2</name>
    <name evidence="7" type="ORF">CG7158</name>
</gene>